<gene>
    <name evidence="1" type="primary">trpS</name>
    <name type="ordered locus">SAG2168</name>
</gene>
<feature type="chain" id="PRO_0000136684" description="Tryptophan--tRNA ligase">
    <location>
        <begin position="1"/>
        <end position="341"/>
    </location>
</feature>
<feature type="short sequence motif" description="'HIGH' region" evidence="1">
    <location>
        <begin position="12"/>
        <end position="20"/>
    </location>
</feature>
<feature type="short sequence motif" description="'KMSKS' region" evidence="1">
    <location>
        <begin position="202"/>
        <end position="206"/>
    </location>
</feature>
<feature type="binding site" evidence="1">
    <location>
        <begin position="11"/>
        <end position="13"/>
    </location>
    <ligand>
        <name>ATP</name>
        <dbReference type="ChEBI" id="CHEBI:30616"/>
    </ligand>
</feature>
<feature type="binding site" evidence="1">
    <location>
        <begin position="19"/>
        <end position="20"/>
    </location>
    <ligand>
        <name>ATP</name>
        <dbReference type="ChEBI" id="CHEBI:30616"/>
    </ligand>
</feature>
<feature type="binding site" evidence="1">
    <location>
        <position position="140"/>
    </location>
    <ligand>
        <name>L-tryptophan</name>
        <dbReference type="ChEBI" id="CHEBI:57912"/>
    </ligand>
</feature>
<feature type="binding site" evidence="1">
    <location>
        <begin position="152"/>
        <end position="154"/>
    </location>
    <ligand>
        <name>ATP</name>
        <dbReference type="ChEBI" id="CHEBI:30616"/>
    </ligand>
</feature>
<feature type="binding site" evidence="1">
    <location>
        <position position="194"/>
    </location>
    <ligand>
        <name>ATP</name>
        <dbReference type="ChEBI" id="CHEBI:30616"/>
    </ligand>
</feature>
<feature type="binding site" evidence="1">
    <location>
        <begin position="202"/>
        <end position="206"/>
    </location>
    <ligand>
        <name>ATP</name>
        <dbReference type="ChEBI" id="CHEBI:30616"/>
    </ligand>
</feature>
<accession>Q8DWP7</accession>
<sequence>MTKPIILTGDRPTGKLHIGHYVGSLKNRVLLQNEGSYTLFVFLADQQALTDHAKDPQTIVESIGNVALDYLAVGLDPNKSTLFIQSQIPELAELSMYYMNLVSLARLERNPTVKTEIAQKGFGESIPAGFLVYPVAQAADITAFKANLVPVGTDQKPMIEQTREIVRSFNHAYNCQVLVEPEGIYPENDAAGRLPGLDGNAKMSKSLNNGIFLADDMDTVKKKVMSMYTDPNHIKVEEPGQIEGNMVFHYLDVFGRDEDQKEITAMKEHYQKGGLGDVKTKRYLLDILERELSPIRERRLEYAKDMGQVYQMLQKGSEKAQAVAASTLDEVKSAMGLNYFK</sequence>
<comment type="function">
    <text evidence="1">Catalyzes the attachment of tryptophan to tRNA(Trp).</text>
</comment>
<comment type="catalytic activity">
    <reaction evidence="1">
        <text>tRNA(Trp) + L-tryptophan + ATP = L-tryptophyl-tRNA(Trp) + AMP + diphosphate + H(+)</text>
        <dbReference type="Rhea" id="RHEA:24080"/>
        <dbReference type="Rhea" id="RHEA-COMP:9671"/>
        <dbReference type="Rhea" id="RHEA-COMP:9705"/>
        <dbReference type="ChEBI" id="CHEBI:15378"/>
        <dbReference type="ChEBI" id="CHEBI:30616"/>
        <dbReference type="ChEBI" id="CHEBI:33019"/>
        <dbReference type="ChEBI" id="CHEBI:57912"/>
        <dbReference type="ChEBI" id="CHEBI:78442"/>
        <dbReference type="ChEBI" id="CHEBI:78535"/>
        <dbReference type="ChEBI" id="CHEBI:456215"/>
        <dbReference type="EC" id="6.1.1.2"/>
    </reaction>
</comment>
<comment type="subunit">
    <text evidence="1">Homodimer.</text>
</comment>
<comment type="subcellular location">
    <subcellularLocation>
        <location evidence="1">Cytoplasm</location>
    </subcellularLocation>
</comment>
<comment type="similarity">
    <text evidence="1">Belongs to the class-I aminoacyl-tRNA synthetase family.</text>
</comment>
<name>SYW_STRA5</name>
<keyword id="KW-0030">Aminoacyl-tRNA synthetase</keyword>
<keyword id="KW-0067">ATP-binding</keyword>
<keyword id="KW-0963">Cytoplasm</keyword>
<keyword id="KW-0436">Ligase</keyword>
<keyword id="KW-0547">Nucleotide-binding</keyword>
<keyword id="KW-0648">Protein biosynthesis</keyword>
<keyword id="KW-1185">Reference proteome</keyword>
<proteinExistence type="inferred from homology"/>
<protein>
    <recommendedName>
        <fullName evidence="1">Tryptophan--tRNA ligase</fullName>
        <ecNumber evidence="1">6.1.1.2</ecNumber>
    </recommendedName>
    <alternativeName>
        <fullName evidence="1">Tryptophanyl-tRNA synthetase</fullName>
        <shortName evidence="1">TrpRS</shortName>
    </alternativeName>
</protein>
<organism>
    <name type="scientific">Streptococcus agalactiae serotype V (strain ATCC BAA-611 / 2603 V/R)</name>
    <dbReference type="NCBI Taxonomy" id="208435"/>
    <lineage>
        <taxon>Bacteria</taxon>
        <taxon>Bacillati</taxon>
        <taxon>Bacillota</taxon>
        <taxon>Bacilli</taxon>
        <taxon>Lactobacillales</taxon>
        <taxon>Streptococcaceae</taxon>
        <taxon>Streptococcus</taxon>
    </lineage>
</organism>
<evidence type="ECO:0000255" key="1">
    <source>
        <dbReference type="HAMAP-Rule" id="MF_00140"/>
    </source>
</evidence>
<dbReference type="EC" id="6.1.1.2" evidence="1"/>
<dbReference type="EMBL" id="AE009948">
    <property type="protein sequence ID" value="AAN01026.1"/>
    <property type="molecule type" value="Genomic_DNA"/>
</dbReference>
<dbReference type="RefSeq" id="NP_689153.1">
    <property type="nucleotide sequence ID" value="NC_004116.1"/>
</dbReference>
<dbReference type="RefSeq" id="WP_000165475.1">
    <property type="nucleotide sequence ID" value="NC_004116.1"/>
</dbReference>
<dbReference type="SMR" id="Q8DWP7"/>
<dbReference type="STRING" id="208435.SAG2168"/>
<dbReference type="GeneID" id="66886903"/>
<dbReference type="KEGG" id="sag:SAG2168"/>
<dbReference type="PATRIC" id="fig|208435.3.peg.2171"/>
<dbReference type="HOGENOM" id="CLU_029244_0_1_9"/>
<dbReference type="OrthoDB" id="9801042at2"/>
<dbReference type="Proteomes" id="UP000000821">
    <property type="component" value="Chromosome"/>
</dbReference>
<dbReference type="GO" id="GO:0005829">
    <property type="term" value="C:cytosol"/>
    <property type="evidence" value="ECO:0007669"/>
    <property type="project" value="TreeGrafter"/>
</dbReference>
<dbReference type="GO" id="GO:0005524">
    <property type="term" value="F:ATP binding"/>
    <property type="evidence" value="ECO:0007669"/>
    <property type="project" value="UniProtKB-UniRule"/>
</dbReference>
<dbReference type="GO" id="GO:0004830">
    <property type="term" value="F:tryptophan-tRNA ligase activity"/>
    <property type="evidence" value="ECO:0007669"/>
    <property type="project" value="UniProtKB-UniRule"/>
</dbReference>
<dbReference type="GO" id="GO:0006436">
    <property type="term" value="P:tryptophanyl-tRNA aminoacylation"/>
    <property type="evidence" value="ECO:0007669"/>
    <property type="project" value="UniProtKB-UniRule"/>
</dbReference>
<dbReference type="CDD" id="cd00806">
    <property type="entry name" value="TrpRS_core"/>
    <property type="match status" value="1"/>
</dbReference>
<dbReference type="FunFam" id="1.10.240.10:FF:000005">
    <property type="entry name" value="Tryptophan--tRNA ligase"/>
    <property type="match status" value="1"/>
</dbReference>
<dbReference type="FunFam" id="3.40.50.620:FF:000094">
    <property type="entry name" value="Tryptophan--tRNA ligase"/>
    <property type="match status" value="1"/>
</dbReference>
<dbReference type="Gene3D" id="3.40.50.620">
    <property type="entry name" value="HUPs"/>
    <property type="match status" value="1"/>
</dbReference>
<dbReference type="Gene3D" id="1.10.240.10">
    <property type="entry name" value="Tyrosyl-Transfer RNA Synthetase"/>
    <property type="match status" value="1"/>
</dbReference>
<dbReference type="HAMAP" id="MF_00140_B">
    <property type="entry name" value="Trp_tRNA_synth_B"/>
    <property type="match status" value="1"/>
</dbReference>
<dbReference type="InterPro" id="IPR001412">
    <property type="entry name" value="aa-tRNA-synth_I_CS"/>
</dbReference>
<dbReference type="InterPro" id="IPR002305">
    <property type="entry name" value="aa-tRNA-synth_Ic"/>
</dbReference>
<dbReference type="InterPro" id="IPR014729">
    <property type="entry name" value="Rossmann-like_a/b/a_fold"/>
</dbReference>
<dbReference type="InterPro" id="IPR002306">
    <property type="entry name" value="Trp-tRNA-ligase"/>
</dbReference>
<dbReference type="InterPro" id="IPR024109">
    <property type="entry name" value="Trp-tRNA-ligase_bac-type"/>
</dbReference>
<dbReference type="InterPro" id="IPR050203">
    <property type="entry name" value="Trp-tRNA_synthetase"/>
</dbReference>
<dbReference type="NCBIfam" id="TIGR00233">
    <property type="entry name" value="trpS"/>
    <property type="match status" value="1"/>
</dbReference>
<dbReference type="PANTHER" id="PTHR43766">
    <property type="entry name" value="TRYPTOPHAN--TRNA LIGASE, MITOCHONDRIAL"/>
    <property type="match status" value="1"/>
</dbReference>
<dbReference type="PANTHER" id="PTHR43766:SF1">
    <property type="entry name" value="TRYPTOPHAN--TRNA LIGASE, MITOCHONDRIAL"/>
    <property type="match status" value="1"/>
</dbReference>
<dbReference type="Pfam" id="PF00579">
    <property type="entry name" value="tRNA-synt_1b"/>
    <property type="match status" value="1"/>
</dbReference>
<dbReference type="PRINTS" id="PR01039">
    <property type="entry name" value="TRNASYNTHTRP"/>
</dbReference>
<dbReference type="SUPFAM" id="SSF52374">
    <property type="entry name" value="Nucleotidylyl transferase"/>
    <property type="match status" value="1"/>
</dbReference>
<dbReference type="PROSITE" id="PS00178">
    <property type="entry name" value="AA_TRNA_LIGASE_I"/>
    <property type="match status" value="1"/>
</dbReference>
<reference key="1">
    <citation type="journal article" date="2002" name="Proc. Natl. Acad. Sci. U.S.A.">
        <title>Complete genome sequence and comparative genomic analysis of an emerging human pathogen, serotype V Streptococcus agalactiae.</title>
        <authorList>
            <person name="Tettelin H."/>
            <person name="Masignani V."/>
            <person name="Cieslewicz M.J."/>
            <person name="Eisen J.A."/>
            <person name="Peterson S.N."/>
            <person name="Wessels M.R."/>
            <person name="Paulsen I.T."/>
            <person name="Nelson K.E."/>
            <person name="Margarit I."/>
            <person name="Read T.D."/>
            <person name="Madoff L.C."/>
            <person name="Wolf A.M."/>
            <person name="Beanan M.J."/>
            <person name="Brinkac L.M."/>
            <person name="Daugherty S.C."/>
            <person name="DeBoy R.T."/>
            <person name="Durkin A.S."/>
            <person name="Kolonay J.F."/>
            <person name="Madupu R."/>
            <person name="Lewis M.R."/>
            <person name="Radune D."/>
            <person name="Fedorova N.B."/>
            <person name="Scanlan D."/>
            <person name="Khouri H.M."/>
            <person name="Mulligan S."/>
            <person name="Carty H.A."/>
            <person name="Cline R.T."/>
            <person name="Van Aken S.E."/>
            <person name="Gill J."/>
            <person name="Scarselli M."/>
            <person name="Mora M."/>
            <person name="Iacobini E.T."/>
            <person name="Brettoni C."/>
            <person name="Galli G."/>
            <person name="Mariani M."/>
            <person name="Vegni F."/>
            <person name="Maione D."/>
            <person name="Rinaudo D."/>
            <person name="Rappuoli R."/>
            <person name="Telford J.L."/>
            <person name="Kasper D.L."/>
            <person name="Grandi G."/>
            <person name="Fraser C.M."/>
        </authorList>
    </citation>
    <scope>NUCLEOTIDE SEQUENCE [LARGE SCALE GENOMIC DNA]</scope>
    <source>
        <strain>ATCC BAA-611 / 2603 V/R</strain>
    </source>
</reference>